<proteinExistence type="inferred from homology"/>
<comment type="catalytic activity">
    <reaction evidence="2">
        <text>D-glyceraldehyde 3-phosphate + phosphate + NAD(+) = (2R)-3-phospho-glyceroyl phosphate + NADH + H(+)</text>
        <dbReference type="Rhea" id="RHEA:10300"/>
        <dbReference type="ChEBI" id="CHEBI:15378"/>
        <dbReference type="ChEBI" id="CHEBI:43474"/>
        <dbReference type="ChEBI" id="CHEBI:57540"/>
        <dbReference type="ChEBI" id="CHEBI:57604"/>
        <dbReference type="ChEBI" id="CHEBI:57945"/>
        <dbReference type="ChEBI" id="CHEBI:59776"/>
        <dbReference type="EC" id="1.2.1.12"/>
    </reaction>
</comment>
<comment type="pathway">
    <text>Carbohydrate degradation; glycolysis; pyruvate from D-glyceraldehyde 3-phosphate: step 1/5.</text>
</comment>
<comment type="subunit">
    <text evidence="1">Homotetramer.</text>
</comment>
<comment type="subcellular location">
    <subcellularLocation>
        <location evidence="1">Cytoplasm</location>
    </subcellularLocation>
</comment>
<comment type="similarity">
    <text evidence="3">Belongs to the glyceraldehyde-3-phosphate dehydrogenase family.</text>
</comment>
<dbReference type="EC" id="1.2.1.12"/>
<dbReference type="EMBL" id="CR382129">
    <property type="protein sequence ID" value="CAG81816.1"/>
    <property type="molecule type" value="Genomic_DNA"/>
</dbReference>
<dbReference type="RefSeq" id="XP_501515.1">
    <property type="nucleotide sequence ID" value="XM_501515.1"/>
</dbReference>
<dbReference type="SMR" id="Q6CCU7"/>
<dbReference type="FunCoup" id="Q6CCU7">
    <property type="interactions" value="1243"/>
</dbReference>
<dbReference type="STRING" id="284591.Q6CCU7"/>
<dbReference type="EnsemblFungi" id="CAG81816">
    <property type="protein sequence ID" value="CAG81816"/>
    <property type="gene ID" value="YALI0_C06369g"/>
</dbReference>
<dbReference type="KEGG" id="yli:2909309"/>
<dbReference type="VEuPathDB" id="FungiDB:YALI0_C06369g"/>
<dbReference type="HOGENOM" id="CLU_030140_0_3_1"/>
<dbReference type="InParanoid" id="Q6CCU7"/>
<dbReference type="OMA" id="YGYTCNM"/>
<dbReference type="OrthoDB" id="77907at4891"/>
<dbReference type="UniPathway" id="UPA00109">
    <property type="reaction ID" value="UER00184"/>
</dbReference>
<dbReference type="Proteomes" id="UP000001300">
    <property type="component" value="Chromosome C"/>
</dbReference>
<dbReference type="GO" id="GO:0005829">
    <property type="term" value="C:cytosol"/>
    <property type="evidence" value="ECO:0000318"/>
    <property type="project" value="GO_Central"/>
</dbReference>
<dbReference type="GO" id="GO:0004365">
    <property type="term" value="F:glyceraldehyde-3-phosphate dehydrogenase (NAD+) (phosphorylating) activity"/>
    <property type="evidence" value="ECO:0000318"/>
    <property type="project" value="GO_Central"/>
</dbReference>
<dbReference type="GO" id="GO:0051287">
    <property type="term" value="F:NAD binding"/>
    <property type="evidence" value="ECO:0007669"/>
    <property type="project" value="InterPro"/>
</dbReference>
<dbReference type="GO" id="GO:0050661">
    <property type="term" value="F:NADP binding"/>
    <property type="evidence" value="ECO:0007669"/>
    <property type="project" value="InterPro"/>
</dbReference>
<dbReference type="GO" id="GO:0006006">
    <property type="term" value="P:glucose metabolic process"/>
    <property type="evidence" value="ECO:0007669"/>
    <property type="project" value="InterPro"/>
</dbReference>
<dbReference type="GO" id="GO:0006096">
    <property type="term" value="P:glycolytic process"/>
    <property type="evidence" value="ECO:0000318"/>
    <property type="project" value="GO_Central"/>
</dbReference>
<dbReference type="CDD" id="cd18126">
    <property type="entry name" value="GAPDH_I_C"/>
    <property type="match status" value="1"/>
</dbReference>
<dbReference type="CDD" id="cd05214">
    <property type="entry name" value="GAPDH_I_N"/>
    <property type="match status" value="1"/>
</dbReference>
<dbReference type="FunFam" id="3.30.360.10:FF:000001">
    <property type="entry name" value="Glyceraldehyde-3-phosphate dehydrogenase"/>
    <property type="match status" value="1"/>
</dbReference>
<dbReference type="FunFam" id="3.40.50.720:FF:000020">
    <property type="entry name" value="Glyceraldehyde-3-phosphate dehydrogenase"/>
    <property type="match status" value="1"/>
</dbReference>
<dbReference type="Gene3D" id="3.30.360.10">
    <property type="entry name" value="Dihydrodipicolinate Reductase, domain 2"/>
    <property type="match status" value="1"/>
</dbReference>
<dbReference type="Gene3D" id="3.40.50.720">
    <property type="entry name" value="NAD(P)-binding Rossmann-like Domain"/>
    <property type="match status" value="1"/>
</dbReference>
<dbReference type="InterPro" id="IPR020831">
    <property type="entry name" value="GlycerAld/Erythrose_P_DH"/>
</dbReference>
<dbReference type="InterPro" id="IPR020830">
    <property type="entry name" value="GlycerAld_3-P_DH_AS"/>
</dbReference>
<dbReference type="InterPro" id="IPR020829">
    <property type="entry name" value="GlycerAld_3-P_DH_cat"/>
</dbReference>
<dbReference type="InterPro" id="IPR020828">
    <property type="entry name" value="GlycerAld_3-P_DH_NAD(P)-bd"/>
</dbReference>
<dbReference type="InterPro" id="IPR006424">
    <property type="entry name" value="Glyceraldehyde-3-P_DH_1"/>
</dbReference>
<dbReference type="InterPro" id="IPR036291">
    <property type="entry name" value="NAD(P)-bd_dom_sf"/>
</dbReference>
<dbReference type="NCBIfam" id="TIGR01534">
    <property type="entry name" value="GAPDH-I"/>
    <property type="match status" value="1"/>
</dbReference>
<dbReference type="PANTHER" id="PTHR10836">
    <property type="entry name" value="GLYCERALDEHYDE 3-PHOSPHATE DEHYDROGENASE"/>
    <property type="match status" value="1"/>
</dbReference>
<dbReference type="PANTHER" id="PTHR10836:SF76">
    <property type="entry name" value="GLYCERALDEHYDE-3-PHOSPHATE DEHYDROGENASE-RELATED"/>
    <property type="match status" value="1"/>
</dbReference>
<dbReference type="Pfam" id="PF02800">
    <property type="entry name" value="Gp_dh_C"/>
    <property type="match status" value="1"/>
</dbReference>
<dbReference type="Pfam" id="PF00044">
    <property type="entry name" value="Gp_dh_N"/>
    <property type="match status" value="1"/>
</dbReference>
<dbReference type="PIRSF" id="PIRSF000149">
    <property type="entry name" value="GAP_DH"/>
    <property type="match status" value="1"/>
</dbReference>
<dbReference type="PRINTS" id="PR00078">
    <property type="entry name" value="G3PDHDRGNASE"/>
</dbReference>
<dbReference type="SMART" id="SM00846">
    <property type="entry name" value="Gp_dh_N"/>
    <property type="match status" value="1"/>
</dbReference>
<dbReference type="SUPFAM" id="SSF55347">
    <property type="entry name" value="Glyceraldehyde-3-phosphate dehydrogenase-like, C-terminal domain"/>
    <property type="match status" value="1"/>
</dbReference>
<dbReference type="SUPFAM" id="SSF51735">
    <property type="entry name" value="NAD(P)-binding Rossmann-fold domains"/>
    <property type="match status" value="1"/>
</dbReference>
<dbReference type="PROSITE" id="PS00071">
    <property type="entry name" value="GAPDH"/>
    <property type="match status" value="1"/>
</dbReference>
<accession>Q6CCU7</accession>
<protein>
    <recommendedName>
        <fullName>Glyceraldehyde-3-phosphate dehydrogenase</fullName>
        <shortName>GAPDH</shortName>
        <ecNumber>1.2.1.12</ecNumber>
    </recommendedName>
</protein>
<organism>
    <name type="scientific">Yarrowia lipolytica (strain CLIB 122 / E 150)</name>
    <name type="common">Yeast</name>
    <name type="synonym">Candida lipolytica</name>
    <dbReference type="NCBI Taxonomy" id="284591"/>
    <lineage>
        <taxon>Eukaryota</taxon>
        <taxon>Fungi</taxon>
        <taxon>Dikarya</taxon>
        <taxon>Ascomycota</taxon>
        <taxon>Saccharomycotina</taxon>
        <taxon>Dipodascomycetes</taxon>
        <taxon>Dipodascales</taxon>
        <taxon>Dipodascales incertae sedis</taxon>
        <taxon>Yarrowia</taxon>
    </lineage>
</organism>
<gene>
    <name type="primary">GPD</name>
    <name type="ordered locus">YALI0C06369g</name>
</gene>
<keyword id="KW-0963">Cytoplasm</keyword>
<keyword id="KW-0324">Glycolysis</keyword>
<keyword id="KW-0520">NAD</keyword>
<keyword id="KW-0560">Oxidoreductase</keyword>
<keyword id="KW-1185">Reference proteome</keyword>
<feature type="chain" id="PRO_0000145588" description="Glyceraldehyde-3-phosphate dehydrogenase">
    <location>
        <begin position="1"/>
        <end position="338"/>
    </location>
</feature>
<feature type="active site" description="Nucleophile" evidence="2">
    <location>
        <position position="151"/>
    </location>
</feature>
<feature type="binding site" evidence="1">
    <location>
        <begin position="12"/>
        <end position="13"/>
    </location>
    <ligand>
        <name>NAD(+)</name>
        <dbReference type="ChEBI" id="CHEBI:57540"/>
    </ligand>
</feature>
<feature type="binding site" evidence="1">
    <location>
        <position position="34"/>
    </location>
    <ligand>
        <name>NAD(+)</name>
        <dbReference type="ChEBI" id="CHEBI:57540"/>
    </ligand>
</feature>
<feature type="binding site" evidence="1">
    <location>
        <position position="79"/>
    </location>
    <ligand>
        <name>NAD(+)</name>
        <dbReference type="ChEBI" id="CHEBI:57540"/>
    </ligand>
</feature>
<feature type="binding site" evidence="1">
    <location>
        <begin position="150"/>
        <end position="152"/>
    </location>
    <ligand>
        <name>D-glyceraldehyde 3-phosphate</name>
        <dbReference type="ChEBI" id="CHEBI:59776"/>
    </ligand>
</feature>
<feature type="binding site" evidence="1">
    <location>
        <position position="181"/>
    </location>
    <ligand>
        <name>D-glyceraldehyde 3-phosphate</name>
        <dbReference type="ChEBI" id="CHEBI:59776"/>
    </ligand>
</feature>
<feature type="binding site" evidence="1">
    <location>
        <begin position="210"/>
        <end position="211"/>
    </location>
    <ligand>
        <name>D-glyceraldehyde 3-phosphate</name>
        <dbReference type="ChEBI" id="CHEBI:59776"/>
    </ligand>
</feature>
<feature type="binding site" evidence="1">
    <location>
        <position position="233"/>
    </location>
    <ligand>
        <name>D-glyceraldehyde 3-phosphate</name>
        <dbReference type="ChEBI" id="CHEBI:59776"/>
    </ligand>
</feature>
<feature type="binding site" evidence="1">
    <location>
        <position position="316"/>
    </location>
    <ligand>
        <name>NAD(+)</name>
        <dbReference type="ChEBI" id="CHEBI:57540"/>
    </ligand>
</feature>
<feature type="site" description="Activates thiol group during catalysis" evidence="1">
    <location>
        <position position="178"/>
    </location>
</feature>
<reference key="1">
    <citation type="journal article" date="2004" name="Nature">
        <title>Genome evolution in yeasts.</title>
        <authorList>
            <person name="Dujon B."/>
            <person name="Sherman D."/>
            <person name="Fischer G."/>
            <person name="Durrens P."/>
            <person name="Casaregola S."/>
            <person name="Lafontaine I."/>
            <person name="de Montigny J."/>
            <person name="Marck C."/>
            <person name="Neuveglise C."/>
            <person name="Talla E."/>
            <person name="Goffard N."/>
            <person name="Frangeul L."/>
            <person name="Aigle M."/>
            <person name="Anthouard V."/>
            <person name="Babour A."/>
            <person name="Barbe V."/>
            <person name="Barnay S."/>
            <person name="Blanchin S."/>
            <person name="Beckerich J.-M."/>
            <person name="Beyne E."/>
            <person name="Bleykasten C."/>
            <person name="Boisrame A."/>
            <person name="Boyer J."/>
            <person name="Cattolico L."/>
            <person name="Confanioleri F."/>
            <person name="de Daruvar A."/>
            <person name="Despons L."/>
            <person name="Fabre E."/>
            <person name="Fairhead C."/>
            <person name="Ferry-Dumazet H."/>
            <person name="Groppi A."/>
            <person name="Hantraye F."/>
            <person name="Hennequin C."/>
            <person name="Jauniaux N."/>
            <person name="Joyet P."/>
            <person name="Kachouri R."/>
            <person name="Kerrest A."/>
            <person name="Koszul R."/>
            <person name="Lemaire M."/>
            <person name="Lesur I."/>
            <person name="Ma L."/>
            <person name="Muller H."/>
            <person name="Nicaud J.-M."/>
            <person name="Nikolski M."/>
            <person name="Oztas S."/>
            <person name="Ozier-Kalogeropoulos O."/>
            <person name="Pellenz S."/>
            <person name="Potier S."/>
            <person name="Richard G.-F."/>
            <person name="Straub M.-L."/>
            <person name="Suleau A."/>
            <person name="Swennen D."/>
            <person name="Tekaia F."/>
            <person name="Wesolowski-Louvel M."/>
            <person name="Westhof E."/>
            <person name="Wirth B."/>
            <person name="Zeniou-Meyer M."/>
            <person name="Zivanovic Y."/>
            <person name="Bolotin-Fukuhara M."/>
            <person name="Thierry A."/>
            <person name="Bouchier C."/>
            <person name="Caudron B."/>
            <person name="Scarpelli C."/>
            <person name="Gaillardin C."/>
            <person name="Weissenbach J."/>
            <person name="Wincker P."/>
            <person name="Souciet J.-L."/>
        </authorList>
    </citation>
    <scope>NUCLEOTIDE SEQUENCE [LARGE SCALE GENOMIC DNA]</scope>
    <source>
        <strain>CLIB 122 / E 150</strain>
    </source>
</reference>
<sequence length="338" mass="35819">MAIKVGINGFGRIGRIVLRNALKNPEVEVVAVNDPFIDTEYAAYMFKYDSTHGRFKGKVEAKDGGLIIDGKHIQVFGERDPSNIPWGKAGADYVVESTGVFTGKEAASAHLKGGAKKVIISAPSGDAPMFVVGVNLDAYKPDMTVISNASCTTNCLAPLAKVVNDKYGIIEGLMTTVHSITATQKTVDGPSHKDWRGGRTASGNIIPSSTGAAKAVGKVIPELNGKLTGMSLRVPTVDVSVVDLTVRIKNGASYEDIKATMKAASESPELKGILGYTDEDVVSTDFIGDTHSSIFDAKAGIGLNDNFVKLISWYDNEYGYSARVVDLIVAVAKKDASA</sequence>
<name>G3P_YARLI</name>
<evidence type="ECO:0000250" key="1"/>
<evidence type="ECO:0000255" key="2">
    <source>
        <dbReference type="PROSITE-ProRule" id="PRU10009"/>
    </source>
</evidence>
<evidence type="ECO:0000305" key="3"/>